<accession>O35132</accession>
<accession>O35076</accession>
<protein>
    <recommendedName>
        <fullName>25-hydroxyvitamin D-1 alpha hydroxylase, mitochondrial</fullName>
        <ecNumber evidence="2">1.14.15.18</ecNumber>
    </recommendedName>
    <alternativeName>
        <fullName>25-OHD-1 alpha-hydroxylase</fullName>
    </alternativeName>
    <alternativeName>
        <fullName>25-hydroxyvitamin D(3) 1-alpha-hydroxylase</fullName>
        <shortName>VD3 1A hydroxylase</shortName>
    </alternativeName>
    <alternativeName>
        <fullName>Calcidiol 1-monooxygenase</fullName>
    </alternativeName>
    <alternativeName>
        <fullName>Cytochrome P450 subfamily XXVIIB polypeptide 1</fullName>
    </alternativeName>
    <alternativeName>
        <fullName>Cytochrome P450C1 alpha</fullName>
    </alternativeName>
    <alternativeName>
        <fullName>Cytochrome P450VD1-alpha</fullName>
    </alternativeName>
    <alternativeName>
        <fullName>Cytochrome p450 27B1</fullName>
    </alternativeName>
</protein>
<dbReference type="EC" id="1.14.15.18" evidence="2"/>
<dbReference type="EMBL" id="AF000139">
    <property type="protein sequence ID" value="AAB86461.1"/>
    <property type="molecule type" value="mRNA"/>
</dbReference>
<dbReference type="EMBL" id="AB001992">
    <property type="protein sequence ID" value="BAA23271.1"/>
    <property type="molecule type" value="mRNA"/>
</dbReference>
<dbReference type="RefSeq" id="NP_446215.1">
    <property type="nucleotide sequence ID" value="NM_053763.1"/>
</dbReference>
<dbReference type="SMR" id="O35132"/>
<dbReference type="BioGRID" id="250405">
    <property type="interactions" value="1"/>
</dbReference>
<dbReference type="FunCoup" id="O35132">
    <property type="interactions" value="16"/>
</dbReference>
<dbReference type="STRING" id="10116.ENSRNOP00000064023"/>
<dbReference type="GlyGen" id="O35132">
    <property type="glycosylation" value="1 site"/>
</dbReference>
<dbReference type="PhosphoSitePlus" id="O35132"/>
<dbReference type="PaxDb" id="10116-ENSRNOP00000064023"/>
<dbReference type="GeneID" id="114700"/>
<dbReference type="KEGG" id="rno:114700"/>
<dbReference type="AGR" id="RGD:69192"/>
<dbReference type="CTD" id="1594"/>
<dbReference type="RGD" id="69192">
    <property type="gene designation" value="Cyp27b1"/>
</dbReference>
<dbReference type="eggNOG" id="KOG0159">
    <property type="taxonomic scope" value="Eukaryota"/>
</dbReference>
<dbReference type="InParanoid" id="O35132"/>
<dbReference type="OrthoDB" id="3945418at2759"/>
<dbReference type="PhylomeDB" id="O35132"/>
<dbReference type="BioCyc" id="MetaCyc:MONOMER-14354"/>
<dbReference type="Reactome" id="R-RNO-196791">
    <property type="pathway name" value="Vitamin D (calciferol) metabolism"/>
</dbReference>
<dbReference type="Reactome" id="R-RNO-211916">
    <property type="pathway name" value="Vitamins"/>
</dbReference>
<dbReference type="SABIO-RK" id="O35132"/>
<dbReference type="UniPathway" id="UPA00955"/>
<dbReference type="PRO" id="PR:O35132"/>
<dbReference type="Proteomes" id="UP000002494">
    <property type="component" value="Unplaced"/>
</dbReference>
<dbReference type="GO" id="GO:0005737">
    <property type="term" value="C:cytoplasm"/>
    <property type="evidence" value="ECO:0000266"/>
    <property type="project" value="RGD"/>
</dbReference>
<dbReference type="GO" id="GO:0031966">
    <property type="term" value="C:mitochondrial membrane"/>
    <property type="evidence" value="ECO:0007669"/>
    <property type="project" value="UniProtKB-SubCell"/>
</dbReference>
<dbReference type="GO" id="GO:0005739">
    <property type="term" value="C:mitochondrion"/>
    <property type="evidence" value="ECO:0000318"/>
    <property type="project" value="GO_Central"/>
</dbReference>
<dbReference type="GO" id="GO:0004498">
    <property type="term" value="F:calcidiol 1-monooxygenase activity"/>
    <property type="evidence" value="ECO:0000314"/>
    <property type="project" value="BHF-UCL"/>
</dbReference>
<dbReference type="GO" id="GO:0020037">
    <property type="term" value="F:heme binding"/>
    <property type="evidence" value="ECO:0007669"/>
    <property type="project" value="InterPro"/>
</dbReference>
<dbReference type="GO" id="GO:0005506">
    <property type="term" value="F:iron ion binding"/>
    <property type="evidence" value="ECO:0007669"/>
    <property type="project" value="InterPro"/>
</dbReference>
<dbReference type="GO" id="GO:0062185">
    <property type="term" value="F:secalciferol 1-monooxygenase activity"/>
    <property type="evidence" value="ECO:0000266"/>
    <property type="project" value="RGD"/>
</dbReference>
<dbReference type="GO" id="GO:0030282">
    <property type="term" value="P:bone mineralization"/>
    <property type="evidence" value="ECO:0000266"/>
    <property type="project" value="RGD"/>
</dbReference>
<dbReference type="GO" id="GO:0036378">
    <property type="term" value="P:calcitriol biosynthetic process from calciol"/>
    <property type="evidence" value="ECO:0000266"/>
    <property type="project" value="RGD"/>
</dbReference>
<dbReference type="GO" id="GO:0055074">
    <property type="term" value="P:calcium ion homeostasis"/>
    <property type="evidence" value="ECO:0000266"/>
    <property type="project" value="RGD"/>
</dbReference>
<dbReference type="GO" id="GO:0006816">
    <property type="term" value="P:calcium ion transport"/>
    <property type="evidence" value="ECO:0000266"/>
    <property type="project" value="RGD"/>
</dbReference>
<dbReference type="GO" id="GO:0046697">
    <property type="term" value="P:decidualization"/>
    <property type="evidence" value="ECO:0000266"/>
    <property type="project" value="RGD"/>
</dbReference>
<dbReference type="GO" id="GO:0070314">
    <property type="term" value="P:G1 to G0 transition"/>
    <property type="evidence" value="ECO:0000266"/>
    <property type="project" value="RGD"/>
</dbReference>
<dbReference type="GO" id="GO:0007595">
    <property type="term" value="P:lactation"/>
    <property type="evidence" value="ECO:0000270"/>
    <property type="project" value="RGD"/>
</dbReference>
<dbReference type="GO" id="GO:1900155">
    <property type="term" value="P:negative regulation of bone trabecula formation"/>
    <property type="evidence" value="ECO:0000315"/>
    <property type="project" value="RGD"/>
</dbReference>
<dbReference type="GO" id="GO:0030308">
    <property type="term" value="P:negative regulation of cell growth"/>
    <property type="evidence" value="ECO:0000266"/>
    <property type="project" value="RGD"/>
</dbReference>
<dbReference type="GO" id="GO:0008285">
    <property type="term" value="P:negative regulation of cell population proliferation"/>
    <property type="evidence" value="ECO:0000266"/>
    <property type="project" value="RGD"/>
</dbReference>
<dbReference type="GO" id="GO:0030279">
    <property type="term" value="P:negative regulation of ossification"/>
    <property type="evidence" value="ECO:0000315"/>
    <property type="project" value="RGD"/>
</dbReference>
<dbReference type="GO" id="GO:0045618">
    <property type="term" value="P:positive regulation of keratinocyte differentiation"/>
    <property type="evidence" value="ECO:0000266"/>
    <property type="project" value="RGD"/>
</dbReference>
<dbReference type="GO" id="GO:2000830">
    <property type="term" value="P:positive regulation of parathyroid hormone secretion"/>
    <property type="evidence" value="ECO:0000315"/>
    <property type="project" value="RGD"/>
</dbReference>
<dbReference type="GO" id="GO:0070564">
    <property type="term" value="P:positive regulation of vitamin D receptor signaling pathway"/>
    <property type="evidence" value="ECO:0000266"/>
    <property type="project" value="RGD"/>
</dbReference>
<dbReference type="GO" id="GO:0030500">
    <property type="term" value="P:regulation of bone mineralization"/>
    <property type="evidence" value="ECO:0000266"/>
    <property type="project" value="RGD"/>
</dbReference>
<dbReference type="GO" id="GO:0051592">
    <property type="term" value="P:response to calcium ion"/>
    <property type="evidence" value="ECO:0000270"/>
    <property type="project" value="RGD"/>
</dbReference>
<dbReference type="GO" id="GO:0051591">
    <property type="term" value="P:response to cAMP"/>
    <property type="evidence" value="ECO:0000314"/>
    <property type="project" value="RGD"/>
</dbReference>
<dbReference type="GO" id="GO:0046688">
    <property type="term" value="P:response to copper ion"/>
    <property type="evidence" value="ECO:0000314"/>
    <property type="project" value="RGD"/>
</dbReference>
<dbReference type="GO" id="GO:0043627">
    <property type="term" value="P:response to estrogen"/>
    <property type="evidence" value="ECO:0000266"/>
    <property type="project" value="RGD"/>
</dbReference>
<dbReference type="GO" id="GO:0032868">
    <property type="term" value="P:response to insulin"/>
    <property type="evidence" value="ECO:0000314"/>
    <property type="project" value="RGD"/>
</dbReference>
<dbReference type="GO" id="GO:0032496">
    <property type="term" value="P:response to lipopolysaccharide"/>
    <property type="evidence" value="ECO:0000266"/>
    <property type="project" value="RGD"/>
</dbReference>
<dbReference type="GO" id="GO:0043434">
    <property type="term" value="P:response to peptide hormone"/>
    <property type="evidence" value="ECO:0000270"/>
    <property type="project" value="RGD"/>
</dbReference>
<dbReference type="GO" id="GO:0034695">
    <property type="term" value="P:response to prostaglandin E"/>
    <property type="evidence" value="ECO:0000314"/>
    <property type="project" value="RGD"/>
</dbReference>
<dbReference type="GO" id="GO:0034341">
    <property type="term" value="P:response to type II interferon"/>
    <property type="evidence" value="ECO:0000266"/>
    <property type="project" value="RGD"/>
</dbReference>
<dbReference type="GO" id="GO:0033280">
    <property type="term" value="P:response to vitamin D"/>
    <property type="evidence" value="ECO:0000314"/>
    <property type="project" value="RGD"/>
</dbReference>
<dbReference type="GO" id="GO:0009410">
    <property type="term" value="P:response to xenobiotic stimulus"/>
    <property type="evidence" value="ECO:0000314"/>
    <property type="project" value="RGD"/>
</dbReference>
<dbReference type="GO" id="GO:0042369">
    <property type="term" value="P:vitamin D catabolic process"/>
    <property type="evidence" value="ECO:0000314"/>
    <property type="project" value="BHF-UCL"/>
</dbReference>
<dbReference type="GO" id="GO:0042359">
    <property type="term" value="P:vitamin D metabolic process"/>
    <property type="evidence" value="ECO:0000314"/>
    <property type="project" value="RGD"/>
</dbReference>
<dbReference type="CDD" id="cd20648">
    <property type="entry name" value="CYP27B1"/>
    <property type="match status" value="1"/>
</dbReference>
<dbReference type="FunFam" id="1.10.630.10:FF:000006">
    <property type="entry name" value="Cytochrome P450 302a1, mitochondrial"/>
    <property type="match status" value="1"/>
</dbReference>
<dbReference type="Gene3D" id="1.10.630.10">
    <property type="entry name" value="Cytochrome P450"/>
    <property type="match status" value="1"/>
</dbReference>
<dbReference type="InterPro" id="IPR050479">
    <property type="entry name" value="CYP11_CYP27_families"/>
</dbReference>
<dbReference type="InterPro" id="IPR001128">
    <property type="entry name" value="Cyt_P450"/>
</dbReference>
<dbReference type="InterPro" id="IPR017972">
    <property type="entry name" value="Cyt_P450_CS"/>
</dbReference>
<dbReference type="InterPro" id="IPR002401">
    <property type="entry name" value="Cyt_P450_E_grp-I"/>
</dbReference>
<dbReference type="InterPro" id="IPR036396">
    <property type="entry name" value="Cyt_P450_sf"/>
</dbReference>
<dbReference type="PANTHER" id="PTHR24279">
    <property type="entry name" value="CYTOCHROME P450"/>
    <property type="match status" value="1"/>
</dbReference>
<dbReference type="PANTHER" id="PTHR24279:SF121">
    <property type="entry name" value="CYTOCHROME P450 FAMILY 27 SUBFAMILY B MEMBER 1"/>
    <property type="match status" value="1"/>
</dbReference>
<dbReference type="Pfam" id="PF00067">
    <property type="entry name" value="p450"/>
    <property type="match status" value="1"/>
</dbReference>
<dbReference type="PRINTS" id="PR00463">
    <property type="entry name" value="EP450I"/>
</dbReference>
<dbReference type="PRINTS" id="PR00385">
    <property type="entry name" value="P450"/>
</dbReference>
<dbReference type="SUPFAM" id="SSF48264">
    <property type="entry name" value="Cytochrome P450"/>
    <property type="match status" value="1"/>
</dbReference>
<dbReference type="PROSITE" id="PS00086">
    <property type="entry name" value="CYTOCHROME_P450"/>
    <property type="match status" value="1"/>
</dbReference>
<organism>
    <name type="scientific">Rattus norvegicus</name>
    <name type="common">Rat</name>
    <dbReference type="NCBI Taxonomy" id="10116"/>
    <lineage>
        <taxon>Eukaryota</taxon>
        <taxon>Metazoa</taxon>
        <taxon>Chordata</taxon>
        <taxon>Craniata</taxon>
        <taxon>Vertebrata</taxon>
        <taxon>Euteleostomi</taxon>
        <taxon>Mammalia</taxon>
        <taxon>Eutheria</taxon>
        <taxon>Euarchontoglires</taxon>
        <taxon>Glires</taxon>
        <taxon>Rodentia</taxon>
        <taxon>Myomorpha</taxon>
        <taxon>Muroidea</taxon>
        <taxon>Muridae</taxon>
        <taxon>Murinae</taxon>
        <taxon>Rattus</taxon>
    </lineage>
</organism>
<name>CP27B_RAT</name>
<keyword id="KW-0349">Heme</keyword>
<keyword id="KW-0408">Iron</keyword>
<keyword id="KW-0443">Lipid metabolism</keyword>
<keyword id="KW-0472">Membrane</keyword>
<keyword id="KW-0479">Metal-binding</keyword>
<keyword id="KW-0496">Mitochondrion</keyword>
<keyword id="KW-0503">Monooxygenase</keyword>
<keyword id="KW-0560">Oxidoreductase</keyword>
<keyword id="KW-1185">Reference proteome</keyword>
<keyword id="KW-0809">Transit peptide</keyword>
<sequence length="501" mass="55369">MTQAVKLASRVFHRVQLPSQLGSDSVLRSLSDIPGPSTPSFLAELFCKGGLSRLHELQVHGAARYGPIWSGSFGTLRTVYVADPALVEQLLRQESHCPERCSFSSWSEHRRRHQRACGLLTADGEEWQRLRSLLAPLLLRPQAAAGYAGTLDSVVSDLVRRLRRQRGRGSGLPDLVLDVAGEFYKFGLEGIGAVLLGSRLGCLEAEVPPDTETFIEAVGSVFVSTLLTMAMPSWLHRLIPGPWARLCRDWDQMFAFAQKHVEQREGEAAVRNQGKPEEDLPTGHHLTHFLFREKVSVQSIVGNVTELLLAGVDTVSNTLSWALYELSRHPEVQSALHSEITGAVNPGSYAHLQATALSQLPLLKAVIKEVLRLYPVVPGNSRVPDRDICVGNYVIPQDTLVSLCHYATSRDPAQFREPNSFNPARWLGEGPAPHPFASLPFGFGKRSCIGRRLAELELQMALAQILTHFEVLPEPGALPVKPMTRTVLVPERSIHLQFVDR</sequence>
<feature type="transit peptide" description="Mitochondrion" evidence="3">
    <location>
        <begin position="1"/>
        <end status="unknown"/>
    </location>
</feature>
<feature type="chain" id="PRO_0000003624" description="25-hydroxyvitamin D-1 alpha hydroxylase, mitochondrial">
    <location>
        <begin status="unknown"/>
        <end position="501"/>
    </location>
</feature>
<feature type="binding site" description="axial binding residue" evidence="1">
    <location>
        <position position="448"/>
    </location>
    <ligand>
        <name>heme</name>
        <dbReference type="ChEBI" id="CHEBI:30413"/>
    </ligand>
    <ligandPart>
        <name>Fe</name>
        <dbReference type="ChEBI" id="CHEBI:18248"/>
    </ligandPart>
</feature>
<feature type="sequence conflict" description="In Ref. 1; AAB86461." evidence="4" ref="1">
    <original>H</original>
    <variation>D</variation>
    <location>
        <position position="13"/>
    </location>
</feature>
<feature type="sequence conflict" description="In Ref. 1; AAB86461." evidence="4" ref="1">
    <original>H</original>
    <variation>D</variation>
    <location>
        <position position="55"/>
    </location>
</feature>
<feature type="sequence conflict" description="In Ref. 1; AAB86461." evidence="4" ref="1">
    <original>FSSWSEHRRR</original>
    <variation>SHLGQSTVAS</variation>
    <location>
        <begin position="103"/>
        <end position="112"/>
    </location>
</feature>
<feature type="sequence conflict" description="In Ref. 1; AAB86461." evidence="4" ref="1">
    <original>L</original>
    <variation>W</variation>
    <location>
        <position position="119"/>
    </location>
</feature>
<feature type="sequence conflict" description="In Ref. 1; AAB86461." evidence="4" ref="1">
    <original>RLRSLLAPLLLRPQAA</original>
    <variation>EAPKSPGPASPPTSSS</variation>
    <location>
        <begin position="129"/>
        <end position="144"/>
    </location>
</feature>
<feature type="sequence conflict" description="In Ref. 1; AAB86461." evidence="4" ref="1">
    <original>G</original>
    <variation>R</variation>
    <location>
        <position position="201"/>
    </location>
</feature>
<feature type="sequence conflict" description="In Ref. 1; AAB86461." evidence="4" ref="1">
    <original>D</original>
    <variation>N</variation>
    <location>
        <position position="251"/>
    </location>
</feature>
<feature type="sequence conflict" description="In Ref. 1; AAB86461." evidence="4" ref="1">
    <original>H</original>
    <variation>D</variation>
    <location>
        <position position="288"/>
    </location>
</feature>
<feature type="sequence conflict" description="In Ref. 1; AAB86461." evidence="4" ref="1">
    <original>T</original>
    <variation>R</variation>
    <location>
        <position position="305"/>
    </location>
</feature>
<feature type="sequence conflict" description="In Ref. 1; AAB86461." evidence="4" ref="1">
    <original>RLY</original>
    <variation>MLD</variation>
    <location>
        <begin position="372"/>
        <end position="374"/>
    </location>
</feature>
<proteinExistence type="evidence at transcript level"/>
<gene>
    <name type="primary">Cyp27b1</name>
    <name type="synonym">Cyp27b</name>
</gene>
<reference key="1">
    <citation type="journal article" date="1997" name="J. Bone Miner. Res.">
        <title>The 25-hydroxyvitamin D 1-alpha-hydroxylase gene maps to the pseudovitamin D-deficiency rickets (PDDR) disease locus.</title>
        <authorList>
            <person name="St Arnaud R."/>
            <person name="Messerlian S."/>
            <person name="Moir J.M."/>
            <person name="Omdahl J.L."/>
            <person name="Glorieux F.H."/>
        </authorList>
    </citation>
    <scope>NUCLEOTIDE SEQUENCE [MRNA]</scope>
    <source>
        <strain>Sprague-Dawley</strain>
    </source>
</reference>
<reference key="2">
    <citation type="journal article" date="1997" name="Proc. Natl. Acad. Sci. U.S.A.">
        <title>Cloning and expression of rat 25-hydroxyvitamin D3-1alpha-hydroxylase cDNA.</title>
        <authorList>
            <person name="Shinki T."/>
            <person name="Shimada H."/>
            <person name="Wakino S."/>
            <person name="Anazawa H."/>
            <person name="Hayashi M."/>
            <person name="Saruta T."/>
            <person name="Deluca H.F."/>
            <person name="Suda T."/>
        </authorList>
    </citation>
    <scope>NUCLEOTIDE SEQUENCE [MRNA]</scope>
    <source>
        <tissue>Kidney</tissue>
    </source>
</reference>
<comment type="function">
    <text evidence="2">Catalyzes the conversion of 25-hydroxyvitamin D3 (25(OH)D3) to 1-alpha,25-dihydroxyvitamin D3 (1alpha,25(OH)(2)D3), and of 24,25-dihydroxyvitamin D3 (24,25(OH)(2)D3) to 1-alpha,24,25-trihydroxyvitamin D3 (1alpha,24,25(OH)(3)D3). Is also active with 25-hydroxy-24-oxo-vitamin D3. Plays an important role in normal bone growth, calcium metabolism, and tissue differentiation.</text>
</comment>
<comment type="catalytic activity">
    <reaction evidence="2">
        <text>calcidiol + 2 reduced [adrenodoxin] + O2 + 2 H(+) = calcitriol + 2 oxidized [adrenodoxin] + H2O</text>
        <dbReference type="Rhea" id="RHEA:20573"/>
        <dbReference type="Rhea" id="RHEA-COMP:9998"/>
        <dbReference type="Rhea" id="RHEA-COMP:9999"/>
        <dbReference type="ChEBI" id="CHEBI:15377"/>
        <dbReference type="ChEBI" id="CHEBI:15378"/>
        <dbReference type="ChEBI" id="CHEBI:15379"/>
        <dbReference type="ChEBI" id="CHEBI:17823"/>
        <dbReference type="ChEBI" id="CHEBI:17933"/>
        <dbReference type="ChEBI" id="CHEBI:33737"/>
        <dbReference type="ChEBI" id="CHEBI:33738"/>
        <dbReference type="EC" id="1.14.15.18"/>
    </reaction>
</comment>
<comment type="catalytic activity">
    <reaction evidence="2">
        <text>secalciferol + 2 reduced [adrenodoxin] + O2 + 2 H(+) = calcitetrol + 2 oxidized [adrenodoxin] + H2O</text>
        <dbReference type="Rhea" id="RHEA:49064"/>
        <dbReference type="Rhea" id="RHEA-COMP:9998"/>
        <dbReference type="Rhea" id="RHEA-COMP:9999"/>
        <dbReference type="ChEBI" id="CHEBI:15377"/>
        <dbReference type="ChEBI" id="CHEBI:15378"/>
        <dbReference type="ChEBI" id="CHEBI:15379"/>
        <dbReference type="ChEBI" id="CHEBI:28818"/>
        <dbReference type="ChEBI" id="CHEBI:33737"/>
        <dbReference type="ChEBI" id="CHEBI:33738"/>
        <dbReference type="ChEBI" id="CHEBI:47799"/>
        <dbReference type="EC" id="1.14.15.18"/>
    </reaction>
</comment>
<comment type="cofactor">
    <cofactor evidence="1">
        <name>heme</name>
        <dbReference type="ChEBI" id="CHEBI:30413"/>
    </cofactor>
</comment>
<comment type="pathway">
    <text>Hormone biosynthesis; cholecalciferol biosynthesis.</text>
</comment>
<comment type="subcellular location">
    <subcellularLocation>
        <location>Mitochondrion membrane</location>
    </subcellularLocation>
</comment>
<comment type="tissue specificity">
    <text>Kidney.</text>
</comment>
<comment type="similarity">
    <text evidence="4">Belongs to the cytochrome P450 family.</text>
</comment>
<evidence type="ECO:0000250" key="1"/>
<evidence type="ECO:0000250" key="2">
    <source>
        <dbReference type="UniProtKB" id="O35084"/>
    </source>
</evidence>
<evidence type="ECO:0000255" key="3"/>
<evidence type="ECO:0000305" key="4"/>